<dbReference type="EC" id="4.2.1.2" evidence="1"/>
<dbReference type="EMBL" id="BA000021">
    <property type="protein sequence ID" value="BAC24487.1"/>
    <property type="molecule type" value="Genomic_DNA"/>
</dbReference>
<dbReference type="SMR" id="Q8D2L3"/>
<dbReference type="STRING" id="36870.gene:10368841"/>
<dbReference type="KEGG" id="wbr:fumC"/>
<dbReference type="eggNOG" id="COG0114">
    <property type="taxonomic scope" value="Bacteria"/>
</dbReference>
<dbReference type="HOGENOM" id="CLU_021594_4_1_6"/>
<dbReference type="OrthoDB" id="9802809at2"/>
<dbReference type="UniPathway" id="UPA00223">
    <property type="reaction ID" value="UER01007"/>
</dbReference>
<dbReference type="Proteomes" id="UP000000562">
    <property type="component" value="Chromosome"/>
</dbReference>
<dbReference type="GO" id="GO:0005737">
    <property type="term" value="C:cytoplasm"/>
    <property type="evidence" value="ECO:0007669"/>
    <property type="project" value="UniProtKB-SubCell"/>
</dbReference>
<dbReference type="GO" id="GO:0004333">
    <property type="term" value="F:fumarate hydratase activity"/>
    <property type="evidence" value="ECO:0007669"/>
    <property type="project" value="UniProtKB-UniRule"/>
</dbReference>
<dbReference type="GO" id="GO:0006106">
    <property type="term" value="P:fumarate metabolic process"/>
    <property type="evidence" value="ECO:0007669"/>
    <property type="project" value="InterPro"/>
</dbReference>
<dbReference type="GO" id="GO:0006108">
    <property type="term" value="P:malate metabolic process"/>
    <property type="evidence" value="ECO:0007669"/>
    <property type="project" value="TreeGrafter"/>
</dbReference>
<dbReference type="GO" id="GO:0006099">
    <property type="term" value="P:tricarboxylic acid cycle"/>
    <property type="evidence" value="ECO:0007669"/>
    <property type="project" value="UniProtKB-UniRule"/>
</dbReference>
<dbReference type="CDD" id="cd01362">
    <property type="entry name" value="Fumarase_classII"/>
    <property type="match status" value="1"/>
</dbReference>
<dbReference type="FunFam" id="1.10.40.30:FF:000002">
    <property type="entry name" value="Fumarate hydratase class II"/>
    <property type="match status" value="1"/>
</dbReference>
<dbReference type="FunFam" id="1.10.275.10:FF:000001">
    <property type="entry name" value="Fumarate hydratase, mitochondrial"/>
    <property type="match status" value="1"/>
</dbReference>
<dbReference type="FunFam" id="1.20.200.10:FF:000001">
    <property type="entry name" value="Fumarate hydratase, mitochondrial"/>
    <property type="match status" value="1"/>
</dbReference>
<dbReference type="Gene3D" id="1.10.40.30">
    <property type="entry name" value="Fumarase/aspartase (C-terminal domain)"/>
    <property type="match status" value="1"/>
</dbReference>
<dbReference type="Gene3D" id="1.20.200.10">
    <property type="entry name" value="Fumarase/aspartase (Central domain)"/>
    <property type="match status" value="1"/>
</dbReference>
<dbReference type="Gene3D" id="1.10.275.10">
    <property type="entry name" value="Fumarase/aspartase (N-terminal domain)"/>
    <property type="match status" value="1"/>
</dbReference>
<dbReference type="HAMAP" id="MF_00743">
    <property type="entry name" value="FumaraseC"/>
    <property type="match status" value="1"/>
</dbReference>
<dbReference type="InterPro" id="IPR005677">
    <property type="entry name" value="Fum_hydII"/>
</dbReference>
<dbReference type="InterPro" id="IPR024083">
    <property type="entry name" value="Fumarase/histidase_N"/>
</dbReference>
<dbReference type="InterPro" id="IPR018951">
    <property type="entry name" value="Fumarase_C_C"/>
</dbReference>
<dbReference type="InterPro" id="IPR020557">
    <property type="entry name" value="Fumarate_lyase_CS"/>
</dbReference>
<dbReference type="InterPro" id="IPR000362">
    <property type="entry name" value="Fumarate_lyase_fam"/>
</dbReference>
<dbReference type="InterPro" id="IPR022761">
    <property type="entry name" value="Fumarate_lyase_N"/>
</dbReference>
<dbReference type="InterPro" id="IPR008948">
    <property type="entry name" value="L-Aspartase-like"/>
</dbReference>
<dbReference type="NCBIfam" id="TIGR00979">
    <property type="entry name" value="fumC_II"/>
    <property type="match status" value="1"/>
</dbReference>
<dbReference type="NCBIfam" id="NF008909">
    <property type="entry name" value="PRK12273.1"/>
    <property type="match status" value="1"/>
</dbReference>
<dbReference type="PANTHER" id="PTHR11444">
    <property type="entry name" value="ASPARTATEAMMONIA/ARGININOSUCCINATE/ADENYLOSUCCINATE LYASE"/>
    <property type="match status" value="1"/>
</dbReference>
<dbReference type="PANTHER" id="PTHR11444:SF1">
    <property type="entry name" value="FUMARATE HYDRATASE, MITOCHONDRIAL"/>
    <property type="match status" value="1"/>
</dbReference>
<dbReference type="Pfam" id="PF10415">
    <property type="entry name" value="FumaraseC_C"/>
    <property type="match status" value="1"/>
</dbReference>
<dbReference type="Pfam" id="PF00206">
    <property type="entry name" value="Lyase_1"/>
    <property type="match status" value="1"/>
</dbReference>
<dbReference type="PRINTS" id="PR00149">
    <property type="entry name" value="FUMRATELYASE"/>
</dbReference>
<dbReference type="SUPFAM" id="SSF48557">
    <property type="entry name" value="L-aspartase-like"/>
    <property type="match status" value="1"/>
</dbReference>
<dbReference type="PROSITE" id="PS00163">
    <property type="entry name" value="FUMARATE_LYASES"/>
    <property type="match status" value="1"/>
</dbReference>
<reference key="1">
    <citation type="journal article" date="2002" name="Nat. Genet.">
        <title>Genome sequence of the endocellular obligate symbiont of tsetse flies, Wigglesworthia glossinidia.</title>
        <authorList>
            <person name="Akman L."/>
            <person name="Yamashita A."/>
            <person name="Watanabe H."/>
            <person name="Oshima K."/>
            <person name="Shiba T."/>
            <person name="Hattori M."/>
            <person name="Aksoy S."/>
        </authorList>
    </citation>
    <scope>NUCLEOTIDE SEQUENCE [LARGE SCALE GENOMIC DNA]</scope>
</reference>
<keyword id="KW-0963">Cytoplasm</keyword>
<keyword id="KW-0456">Lyase</keyword>
<keyword id="KW-1185">Reference proteome</keyword>
<keyword id="KW-0816">Tricarboxylic acid cycle</keyword>
<comment type="function">
    <text evidence="1">Involved in the TCA cycle. Catalyzes the stereospecific interconversion of fumarate to L-malate.</text>
</comment>
<comment type="catalytic activity">
    <reaction evidence="1">
        <text>(S)-malate = fumarate + H2O</text>
        <dbReference type="Rhea" id="RHEA:12460"/>
        <dbReference type="ChEBI" id="CHEBI:15377"/>
        <dbReference type="ChEBI" id="CHEBI:15589"/>
        <dbReference type="ChEBI" id="CHEBI:29806"/>
        <dbReference type="EC" id="4.2.1.2"/>
    </reaction>
</comment>
<comment type="pathway">
    <text evidence="1">Carbohydrate metabolism; tricarboxylic acid cycle; (S)-malate from fumarate: step 1/1.</text>
</comment>
<comment type="subunit">
    <text evidence="1">Homotetramer.</text>
</comment>
<comment type="subcellular location">
    <subcellularLocation>
        <location evidence="1">Cytoplasm</location>
    </subcellularLocation>
</comment>
<comment type="miscellaneous">
    <text evidence="1">There are 2 substrate-binding sites: the catalytic A site, and the non-catalytic B site that may play a role in the transfer of substrate or product between the active site and the solvent. Alternatively, the B site may bind allosteric effectors.</text>
</comment>
<comment type="similarity">
    <text evidence="1">Belongs to the class-II fumarase/aspartase family. Fumarase subfamily.</text>
</comment>
<evidence type="ECO:0000255" key="1">
    <source>
        <dbReference type="HAMAP-Rule" id="MF_00743"/>
    </source>
</evidence>
<feature type="chain" id="PRO_0000161328" description="Fumarate hydratase class II">
    <location>
        <begin position="1"/>
        <end position="464"/>
    </location>
</feature>
<feature type="active site" description="Proton donor/acceptor" evidence="1">
    <location>
        <position position="188"/>
    </location>
</feature>
<feature type="active site" evidence="1">
    <location>
        <position position="318"/>
    </location>
</feature>
<feature type="binding site" evidence="1">
    <location>
        <begin position="98"/>
        <end position="100"/>
    </location>
    <ligand>
        <name>substrate</name>
    </ligand>
</feature>
<feature type="binding site" description="in site B" evidence="1">
    <location>
        <begin position="129"/>
        <end position="132"/>
    </location>
    <ligand>
        <name>substrate</name>
    </ligand>
</feature>
<feature type="binding site" evidence="1">
    <location>
        <begin position="139"/>
        <end position="141"/>
    </location>
    <ligand>
        <name>substrate</name>
    </ligand>
</feature>
<feature type="binding site" evidence="1">
    <location>
        <position position="187"/>
    </location>
    <ligand>
        <name>substrate</name>
    </ligand>
</feature>
<feature type="binding site" evidence="1">
    <location>
        <position position="319"/>
    </location>
    <ligand>
        <name>substrate</name>
    </ligand>
</feature>
<feature type="binding site" evidence="1">
    <location>
        <begin position="324"/>
        <end position="326"/>
    </location>
    <ligand>
        <name>substrate</name>
    </ligand>
</feature>
<feature type="site" description="Important for catalytic activity" evidence="1">
    <location>
        <position position="331"/>
    </location>
</feature>
<organism>
    <name type="scientific">Wigglesworthia glossinidia brevipalpis</name>
    <dbReference type="NCBI Taxonomy" id="36870"/>
    <lineage>
        <taxon>Bacteria</taxon>
        <taxon>Pseudomonadati</taxon>
        <taxon>Pseudomonadota</taxon>
        <taxon>Gammaproteobacteria</taxon>
        <taxon>Enterobacterales</taxon>
        <taxon>Erwiniaceae</taxon>
        <taxon>Wigglesworthia</taxon>
    </lineage>
</organism>
<gene>
    <name evidence="1" type="primary">fumC</name>
    <name type="ordered locus">WIGBR3410</name>
</gene>
<proteinExistence type="inferred from homology"/>
<protein>
    <recommendedName>
        <fullName evidence="1">Fumarate hydratase class II</fullName>
        <shortName evidence="1">Fumarase C</shortName>
        <ecNumber evidence="1">4.2.1.2</ecNumber>
    </recommendedName>
    <alternativeName>
        <fullName evidence="1">Aerobic fumarase</fullName>
    </alternativeName>
    <alternativeName>
        <fullName evidence="1">Iron-independent fumarase</fullName>
    </alternativeName>
</protein>
<accession>Q8D2L3</accession>
<sequence>MLINRIEKDTIGEVELPKKCLWGSQTQRSIYNFNISTEKMPYELIHALVQIKLVAAKVNKDLKLLEEKKADAIIKASEEILSGKYKDSFPLVIWQTGSGTQTNMNVNEVIANIAIKLLGGKYGDYSIIHPNDHVNKSQSSNDVFPTAMHISAVLSLKKNLLPNLIKLKKSFYDKSILFKDIIKIGRTHLQDATPLTLGQEVSSWYCMLKKNIKYIKNSILCISEIALGGTAVGTGLNAHEKYSLKASKLLSEINKHNFISSTNKFESLSTCDAIVKVHSTLKNLSISIMKISNDIRWLSSGPRCGIGELIIPENEPGSSIMPGKVNPTQCESISMICCQVIGNDSAIGIGGLSGNFQLNVFRPMIIYNFLQSVRILSDGIKSFNKKCVIGIKPNIKRIKKFLKESLMLVTSLTPHIGYDKSAKIAKLAHNENITLKEACLKLNYISESQFDILVRPENMIGNKN</sequence>
<name>FUMC_WIGBR</name>